<protein>
    <recommendedName>
        <fullName evidence="3">Small spore coat assembly protein A</fullName>
    </recommendedName>
</protein>
<sequence length="28" mass="2979">MSGGYSNGFALLVVLFILLIIVGAAYIY</sequence>
<gene>
    <name evidence="3" type="primary">sscA</name>
    <name type="synonym">yhzE</name>
    <name type="ordered locus">BSU09958</name>
</gene>
<evidence type="ECO:0000255" key="1"/>
<evidence type="ECO:0000269" key="2">
    <source>
    </source>
</evidence>
<evidence type="ECO:0000303" key="3">
    <source>
    </source>
</evidence>
<evidence type="ECO:0000305" key="4"/>
<evidence type="ECO:0000305" key="5">
    <source>
    </source>
</evidence>
<accession>C0H3Y2</accession>
<comment type="function">
    <text evidence="2">Spore protein involved in the assembly of several components of the spore coat, including CotB, CotG and CotH, and in spore germination.</text>
</comment>
<comment type="subcellular location">
    <subcellularLocation>
        <location evidence="5">Spore coat</location>
    </subcellularLocation>
    <subcellularLocation>
        <location evidence="1">Membrane</location>
        <topology evidence="1">Single-pass membrane protein</topology>
    </subcellularLocation>
    <text evidence="2">Accumulates in mature spores.</text>
</comment>
<comment type="developmental stage">
    <text evidence="2">Expressed during the later stages of sporulation.</text>
</comment>
<comment type="induction">
    <text evidence="2">Expression is regulated by the mother cell-specific transcription factors sigma K and GerE.</text>
</comment>
<comment type="disruption phenotype">
    <text evidence="2">Spores of the null mutant show partial lack of assembly of several coat components, including CotB, CotG and CotH, and impairment of response during germination.</text>
</comment>
<comment type="similarity">
    <text evidence="4">Belongs to the SscA family.</text>
</comment>
<proteinExistence type="evidence at transcript level"/>
<reference key="1">
    <citation type="journal article" date="1997" name="Nature">
        <title>The complete genome sequence of the Gram-positive bacterium Bacillus subtilis.</title>
        <authorList>
            <person name="Kunst F."/>
            <person name="Ogasawara N."/>
            <person name="Moszer I."/>
            <person name="Albertini A.M."/>
            <person name="Alloni G."/>
            <person name="Azevedo V."/>
            <person name="Bertero M.G."/>
            <person name="Bessieres P."/>
            <person name="Bolotin A."/>
            <person name="Borchert S."/>
            <person name="Borriss R."/>
            <person name="Boursier L."/>
            <person name="Brans A."/>
            <person name="Braun M."/>
            <person name="Brignell S.C."/>
            <person name="Bron S."/>
            <person name="Brouillet S."/>
            <person name="Bruschi C.V."/>
            <person name="Caldwell B."/>
            <person name="Capuano V."/>
            <person name="Carter N.M."/>
            <person name="Choi S.-K."/>
            <person name="Codani J.-J."/>
            <person name="Connerton I.F."/>
            <person name="Cummings N.J."/>
            <person name="Daniel R.A."/>
            <person name="Denizot F."/>
            <person name="Devine K.M."/>
            <person name="Duesterhoeft A."/>
            <person name="Ehrlich S.D."/>
            <person name="Emmerson P.T."/>
            <person name="Entian K.-D."/>
            <person name="Errington J."/>
            <person name="Fabret C."/>
            <person name="Ferrari E."/>
            <person name="Foulger D."/>
            <person name="Fritz C."/>
            <person name="Fujita M."/>
            <person name="Fujita Y."/>
            <person name="Fuma S."/>
            <person name="Galizzi A."/>
            <person name="Galleron N."/>
            <person name="Ghim S.-Y."/>
            <person name="Glaser P."/>
            <person name="Goffeau A."/>
            <person name="Golightly E.J."/>
            <person name="Grandi G."/>
            <person name="Guiseppi G."/>
            <person name="Guy B.J."/>
            <person name="Haga K."/>
            <person name="Haiech J."/>
            <person name="Harwood C.R."/>
            <person name="Henaut A."/>
            <person name="Hilbert H."/>
            <person name="Holsappel S."/>
            <person name="Hosono S."/>
            <person name="Hullo M.-F."/>
            <person name="Itaya M."/>
            <person name="Jones L.-M."/>
            <person name="Joris B."/>
            <person name="Karamata D."/>
            <person name="Kasahara Y."/>
            <person name="Klaerr-Blanchard M."/>
            <person name="Klein C."/>
            <person name="Kobayashi Y."/>
            <person name="Koetter P."/>
            <person name="Koningstein G."/>
            <person name="Krogh S."/>
            <person name="Kumano M."/>
            <person name="Kurita K."/>
            <person name="Lapidus A."/>
            <person name="Lardinois S."/>
            <person name="Lauber J."/>
            <person name="Lazarevic V."/>
            <person name="Lee S.-M."/>
            <person name="Levine A."/>
            <person name="Liu H."/>
            <person name="Masuda S."/>
            <person name="Mauel C."/>
            <person name="Medigue C."/>
            <person name="Medina N."/>
            <person name="Mellado R.P."/>
            <person name="Mizuno M."/>
            <person name="Moestl D."/>
            <person name="Nakai S."/>
            <person name="Noback M."/>
            <person name="Noone D."/>
            <person name="O'Reilly M."/>
            <person name="Ogawa K."/>
            <person name="Ogiwara A."/>
            <person name="Oudega B."/>
            <person name="Park S.-H."/>
            <person name="Parro V."/>
            <person name="Pohl T.M."/>
            <person name="Portetelle D."/>
            <person name="Porwollik S."/>
            <person name="Prescott A.M."/>
            <person name="Presecan E."/>
            <person name="Pujic P."/>
            <person name="Purnelle B."/>
            <person name="Rapoport G."/>
            <person name="Rey M."/>
            <person name="Reynolds S."/>
            <person name="Rieger M."/>
            <person name="Rivolta C."/>
            <person name="Rocha E."/>
            <person name="Roche B."/>
            <person name="Rose M."/>
            <person name="Sadaie Y."/>
            <person name="Sato T."/>
            <person name="Scanlan E."/>
            <person name="Schleich S."/>
            <person name="Schroeter R."/>
            <person name="Scoffone F."/>
            <person name="Sekiguchi J."/>
            <person name="Sekowska A."/>
            <person name="Seror S.J."/>
            <person name="Serror P."/>
            <person name="Shin B.-S."/>
            <person name="Soldo B."/>
            <person name="Sorokin A."/>
            <person name="Tacconi E."/>
            <person name="Takagi T."/>
            <person name="Takahashi H."/>
            <person name="Takemaru K."/>
            <person name="Takeuchi M."/>
            <person name="Tamakoshi A."/>
            <person name="Tanaka T."/>
            <person name="Terpstra P."/>
            <person name="Tognoni A."/>
            <person name="Tosato V."/>
            <person name="Uchiyama S."/>
            <person name="Vandenbol M."/>
            <person name="Vannier F."/>
            <person name="Vassarotti A."/>
            <person name="Viari A."/>
            <person name="Wambutt R."/>
            <person name="Wedler E."/>
            <person name="Wedler H."/>
            <person name="Weitzenegger T."/>
            <person name="Winters P."/>
            <person name="Wipat A."/>
            <person name="Yamamoto H."/>
            <person name="Yamane K."/>
            <person name="Yasumoto K."/>
            <person name="Yata K."/>
            <person name="Yoshida K."/>
            <person name="Yoshikawa H.-F."/>
            <person name="Zumstein E."/>
            <person name="Yoshikawa H."/>
            <person name="Danchin A."/>
        </authorList>
    </citation>
    <scope>NUCLEOTIDE SEQUENCE [LARGE SCALE GENOMIC DNA]</scope>
    <source>
        <strain>168</strain>
    </source>
</reference>
<reference key="2">
    <citation type="journal article" date="2011" name="Biosci. Biotechnol. Biochem.">
        <title>A novel small protein of Bacillus subtilis involved in spore germination and spore coat assembly.</title>
        <authorList>
            <person name="Kodama T."/>
            <person name="Matsubayashi T."/>
            <person name="Yanagihara T."/>
            <person name="Komoto H."/>
            <person name="Ara K."/>
            <person name="Ozaki K."/>
            <person name="Kuwana R."/>
            <person name="Imamura D."/>
            <person name="Takamatsu H."/>
            <person name="Watabe K."/>
            <person name="Sekiguchi J."/>
        </authorList>
    </citation>
    <scope>FUNCTION</scope>
    <scope>SUBCELLULAR LOCATION</scope>
    <scope>DEVELOPMENTAL STAGE</scope>
    <scope>INDUCTION</scope>
    <scope>DISRUPTION PHENOTYPE</scope>
    <source>
        <strain>168</strain>
    </source>
</reference>
<name>SSCA_BACSU</name>
<keyword id="KW-0309">Germination</keyword>
<keyword id="KW-0472">Membrane</keyword>
<keyword id="KW-1185">Reference proteome</keyword>
<keyword id="KW-0749">Sporulation</keyword>
<keyword id="KW-0812">Transmembrane</keyword>
<keyword id="KW-1133">Transmembrane helix</keyword>
<dbReference type="EMBL" id="AL009126">
    <property type="protein sequence ID" value="CAX52587.1"/>
    <property type="molecule type" value="Genomic_DNA"/>
</dbReference>
<dbReference type="RefSeq" id="YP_003097699.1">
    <property type="nucleotide sequence ID" value="NC_000964.3"/>
</dbReference>
<dbReference type="FunCoup" id="C0H3Y2">
    <property type="interactions" value="7"/>
</dbReference>
<dbReference type="STRING" id="224308.BSU09958"/>
<dbReference type="PaxDb" id="224308-BSU09958"/>
<dbReference type="EnsemblBacteria" id="CAX52587">
    <property type="protein sequence ID" value="CAX52587"/>
    <property type="gene ID" value="BSU_09958"/>
</dbReference>
<dbReference type="GeneID" id="8303205"/>
<dbReference type="KEGG" id="bsu:BSU09958"/>
<dbReference type="PATRIC" id="fig|224308.179.peg.1069"/>
<dbReference type="InParanoid" id="C0H3Y2"/>
<dbReference type="BioCyc" id="BSUB:BSU09958-MONOMER"/>
<dbReference type="Proteomes" id="UP000001570">
    <property type="component" value="Chromosome"/>
</dbReference>
<dbReference type="GO" id="GO:0016020">
    <property type="term" value="C:membrane"/>
    <property type="evidence" value="ECO:0007669"/>
    <property type="project" value="UniProtKB-SubCell"/>
</dbReference>
<dbReference type="GO" id="GO:0030435">
    <property type="term" value="P:sporulation resulting in formation of a cellular spore"/>
    <property type="evidence" value="ECO:0007669"/>
    <property type="project" value="UniProtKB-KW"/>
</dbReference>
<dbReference type="InterPro" id="IPR010070">
    <property type="entry name" value="YjcZ-like"/>
</dbReference>
<dbReference type="NCBIfam" id="TIGR01732">
    <property type="entry name" value="tiny_TM_bacill"/>
    <property type="match status" value="1"/>
</dbReference>
<dbReference type="Pfam" id="PF09680">
    <property type="entry name" value="YjcZ_2"/>
    <property type="match status" value="1"/>
</dbReference>
<organism>
    <name type="scientific">Bacillus subtilis (strain 168)</name>
    <dbReference type="NCBI Taxonomy" id="224308"/>
    <lineage>
        <taxon>Bacteria</taxon>
        <taxon>Bacillati</taxon>
        <taxon>Bacillota</taxon>
        <taxon>Bacilli</taxon>
        <taxon>Bacillales</taxon>
        <taxon>Bacillaceae</taxon>
        <taxon>Bacillus</taxon>
    </lineage>
</organism>
<feature type="chain" id="PRO_0000384381" description="Small spore coat assembly protein A">
    <location>
        <begin position="1"/>
        <end position="28"/>
    </location>
</feature>
<feature type="transmembrane region" description="Helical" evidence="1">
    <location>
        <begin position="8"/>
        <end position="28"/>
    </location>
</feature>